<comment type="function">
    <text>PPIases accelerate the folding of proteins during protein synthesis.</text>
</comment>
<comment type="catalytic activity">
    <reaction>
        <text>[protein]-peptidylproline (omega=180) = [protein]-peptidylproline (omega=0)</text>
        <dbReference type="Rhea" id="RHEA:16237"/>
        <dbReference type="Rhea" id="RHEA-COMP:10747"/>
        <dbReference type="Rhea" id="RHEA-COMP:10748"/>
        <dbReference type="ChEBI" id="CHEBI:83833"/>
        <dbReference type="ChEBI" id="CHEBI:83834"/>
        <dbReference type="EC" id="5.2.1.8"/>
    </reaction>
</comment>
<comment type="subunit">
    <text evidence="1">Interacts with IFITM5.</text>
</comment>
<comment type="subcellular location">
    <subcellularLocation>
        <location evidence="5">Membrane</location>
        <topology evidence="5">Single-pass membrane protein</topology>
    </subcellularLocation>
</comment>
<comment type="alternative products">
    <event type="alternative splicing"/>
    <isoform>
        <id>Q9NYL4-1</id>
        <name>1</name>
        <sequence type="displayed"/>
    </isoform>
    <isoform>
        <id>Q9NYL4-2</id>
        <name>2</name>
        <sequence type="described" ref="VSP_043037"/>
    </isoform>
</comment>
<comment type="similarity">
    <text evidence="5">Belongs to the FKBP-type PPIase family.</text>
</comment>
<organism>
    <name type="scientific">Homo sapiens</name>
    <name type="common">Human</name>
    <dbReference type="NCBI Taxonomy" id="9606"/>
    <lineage>
        <taxon>Eukaryota</taxon>
        <taxon>Metazoa</taxon>
        <taxon>Chordata</taxon>
        <taxon>Craniata</taxon>
        <taxon>Vertebrata</taxon>
        <taxon>Euteleostomi</taxon>
        <taxon>Mammalia</taxon>
        <taxon>Eutheria</taxon>
        <taxon>Euarchontoglires</taxon>
        <taxon>Primates</taxon>
        <taxon>Haplorrhini</taxon>
        <taxon>Catarrhini</taxon>
        <taxon>Hominidae</taxon>
        <taxon>Homo</taxon>
    </lineage>
</organism>
<dbReference type="EC" id="5.2.1.8"/>
<dbReference type="EMBL" id="AF238079">
    <property type="protein sequence ID" value="AAF63478.1"/>
    <property type="molecule type" value="mRNA"/>
</dbReference>
<dbReference type="EMBL" id="AY358998">
    <property type="protein sequence ID" value="AAQ89357.1"/>
    <property type="molecule type" value="mRNA"/>
</dbReference>
<dbReference type="EMBL" id="AK301455">
    <property type="protein sequence ID" value="BAG62979.1"/>
    <property type="molecule type" value="mRNA"/>
</dbReference>
<dbReference type="EMBL" id="AC073610">
    <property type="status" value="NOT_ANNOTATED_CDS"/>
    <property type="molecule type" value="Genomic_DNA"/>
</dbReference>
<dbReference type="EMBL" id="BC027973">
    <property type="protein sequence ID" value="AAH27973.1"/>
    <property type="molecule type" value="mRNA"/>
</dbReference>
<dbReference type="CCDS" id="CCDS44871.1">
    <molecule id="Q9NYL4-2"/>
</dbReference>
<dbReference type="CCDS" id="CCDS8773.1">
    <molecule id="Q9NYL4-1"/>
</dbReference>
<dbReference type="RefSeq" id="NP_001137253.1">
    <property type="nucleotide sequence ID" value="NM_001143781.1"/>
</dbReference>
<dbReference type="RefSeq" id="NP_001137254.1">
    <molecule id="Q9NYL4-2"/>
    <property type="nucleotide sequence ID" value="NM_001143782.2"/>
</dbReference>
<dbReference type="RefSeq" id="NP_057678.1">
    <molecule id="Q9NYL4-1"/>
    <property type="nucleotide sequence ID" value="NM_016594.3"/>
</dbReference>
<dbReference type="SMR" id="Q9NYL4"/>
<dbReference type="BioGRID" id="119454">
    <property type="interactions" value="26"/>
</dbReference>
<dbReference type="FunCoup" id="Q9NYL4">
    <property type="interactions" value="220"/>
</dbReference>
<dbReference type="IntAct" id="Q9NYL4">
    <property type="interactions" value="9"/>
</dbReference>
<dbReference type="STRING" id="9606.ENSP00000449751"/>
<dbReference type="GlyGen" id="Q9NYL4">
    <property type="glycosylation" value="2 sites, 2 O-linked glycans (2 sites)"/>
</dbReference>
<dbReference type="iPTMnet" id="Q9NYL4"/>
<dbReference type="PhosphoSitePlus" id="Q9NYL4"/>
<dbReference type="BioMuta" id="FKBP11"/>
<dbReference type="DMDM" id="23396601"/>
<dbReference type="jPOST" id="Q9NYL4"/>
<dbReference type="MassIVE" id="Q9NYL4"/>
<dbReference type="PaxDb" id="9606-ENSP00000449751"/>
<dbReference type="PeptideAtlas" id="Q9NYL4"/>
<dbReference type="ProteomicsDB" id="83249">
    <molecule id="Q9NYL4-1"/>
</dbReference>
<dbReference type="ProteomicsDB" id="83250">
    <molecule id="Q9NYL4-2"/>
</dbReference>
<dbReference type="Pumba" id="Q9NYL4"/>
<dbReference type="Antibodypedia" id="25734">
    <property type="antibodies" value="194 antibodies from 24 providers"/>
</dbReference>
<dbReference type="DNASU" id="51303"/>
<dbReference type="Ensembl" id="ENST00000453172.2">
    <molecule id="Q9NYL4-2"/>
    <property type="protein sequence ID" value="ENSP00000396874.2"/>
    <property type="gene ID" value="ENSG00000134285.11"/>
</dbReference>
<dbReference type="Ensembl" id="ENST00000550765.6">
    <molecule id="Q9NYL4-1"/>
    <property type="protein sequence ID" value="ENSP00000449751.1"/>
    <property type="gene ID" value="ENSG00000134285.11"/>
</dbReference>
<dbReference type="GeneID" id="51303"/>
<dbReference type="KEGG" id="hsa:51303"/>
<dbReference type="MANE-Select" id="ENST00000550765.6">
    <property type="protein sequence ID" value="ENSP00000449751.1"/>
    <property type="RefSeq nucleotide sequence ID" value="NM_016594.3"/>
    <property type="RefSeq protein sequence ID" value="NP_057678.1"/>
</dbReference>
<dbReference type="UCSC" id="uc001rsp.4">
    <molecule id="Q9NYL4-1"/>
    <property type="organism name" value="human"/>
</dbReference>
<dbReference type="AGR" id="HGNC:18624"/>
<dbReference type="CTD" id="51303"/>
<dbReference type="DisGeNET" id="51303"/>
<dbReference type="GeneCards" id="FKBP11"/>
<dbReference type="HGNC" id="HGNC:18624">
    <property type="gene designation" value="FKBP11"/>
</dbReference>
<dbReference type="HPA" id="ENSG00000134285">
    <property type="expression patterns" value="Tissue enhanced (pancreas)"/>
</dbReference>
<dbReference type="MIM" id="610571">
    <property type="type" value="gene"/>
</dbReference>
<dbReference type="neXtProt" id="NX_Q9NYL4"/>
<dbReference type="OpenTargets" id="ENSG00000134285"/>
<dbReference type="PharmGKB" id="PA38607"/>
<dbReference type="VEuPathDB" id="HostDB:ENSG00000134285"/>
<dbReference type="eggNOG" id="KOG0549">
    <property type="taxonomic scope" value="Eukaryota"/>
</dbReference>
<dbReference type="GeneTree" id="ENSGT00940000159521"/>
<dbReference type="HOGENOM" id="CLU_013615_8_2_1"/>
<dbReference type="InParanoid" id="Q9NYL4"/>
<dbReference type="OMA" id="VFTCGLA"/>
<dbReference type="OrthoDB" id="1902587at2759"/>
<dbReference type="PAN-GO" id="Q9NYL4">
    <property type="GO annotations" value="2 GO annotations based on evolutionary models"/>
</dbReference>
<dbReference type="PhylomeDB" id="Q9NYL4"/>
<dbReference type="TreeFam" id="TF105296"/>
<dbReference type="PathwayCommons" id="Q9NYL4"/>
<dbReference type="SignaLink" id="Q9NYL4"/>
<dbReference type="BioGRID-ORCS" id="51303">
    <property type="hits" value="13 hits in 1152 CRISPR screens"/>
</dbReference>
<dbReference type="ChiTaRS" id="FKBP11">
    <property type="organism name" value="human"/>
</dbReference>
<dbReference type="GenomeRNAi" id="51303"/>
<dbReference type="Pharos" id="Q9NYL4">
    <property type="development level" value="Tbio"/>
</dbReference>
<dbReference type="PRO" id="PR:Q9NYL4"/>
<dbReference type="Proteomes" id="UP000005640">
    <property type="component" value="Chromosome 12"/>
</dbReference>
<dbReference type="RNAct" id="Q9NYL4">
    <property type="molecule type" value="protein"/>
</dbReference>
<dbReference type="Bgee" id="ENSG00000134285">
    <property type="expression patterns" value="Expressed in body of pancreas and 173 other cell types or tissues"/>
</dbReference>
<dbReference type="ExpressionAtlas" id="Q9NYL4">
    <property type="expression patterns" value="baseline and differential"/>
</dbReference>
<dbReference type="GO" id="GO:0005783">
    <property type="term" value="C:endoplasmic reticulum"/>
    <property type="evidence" value="ECO:0000318"/>
    <property type="project" value="GO_Central"/>
</dbReference>
<dbReference type="GO" id="GO:0016020">
    <property type="term" value="C:membrane"/>
    <property type="evidence" value="ECO:0007005"/>
    <property type="project" value="UniProtKB"/>
</dbReference>
<dbReference type="GO" id="GO:0003755">
    <property type="term" value="F:peptidyl-prolyl cis-trans isomerase activity"/>
    <property type="evidence" value="ECO:0000318"/>
    <property type="project" value="GO_Central"/>
</dbReference>
<dbReference type="GO" id="GO:0061077">
    <property type="term" value="P:chaperone-mediated protein folding"/>
    <property type="evidence" value="ECO:0007669"/>
    <property type="project" value="InterPro"/>
</dbReference>
<dbReference type="FunFam" id="3.10.50.40:FF:000048">
    <property type="entry name" value="Peptidylprolyl isomerase"/>
    <property type="match status" value="1"/>
</dbReference>
<dbReference type="Gene3D" id="3.10.50.40">
    <property type="match status" value="1"/>
</dbReference>
<dbReference type="InterPro" id="IPR044609">
    <property type="entry name" value="FKBP2/11"/>
</dbReference>
<dbReference type="InterPro" id="IPR046357">
    <property type="entry name" value="PPIase_dom_sf"/>
</dbReference>
<dbReference type="InterPro" id="IPR001179">
    <property type="entry name" value="PPIase_FKBP_dom"/>
</dbReference>
<dbReference type="PANTHER" id="PTHR45779:SF2">
    <property type="entry name" value="PEPTIDYL-PROLYL CIS-TRANS ISOMERASE FKBP11"/>
    <property type="match status" value="1"/>
</dbReference>
<dbReference type="PANTHER" id="PTHR45779">
    <property type="entry name" value="PEPTIDYLPROLYL ISOMERASE"/>
    <property type="match status" value="1"/>
</dbReference>
<dbReference type="Pfam" id="PF00254">
    <property type="entry name" value="FKBP_C"/>
    <property type="match status" value="1"/>
</dbReference>
<dbReference type="SUPFAM" id="SSF54534">
    <property type="entry name" value="FKBP-like"/>
    <property type="match status" value="1"/>
</dbReference>
<dbReference type="PROSITE" id="PS50059">
    <property type="entry name" value="FKBP_PPIASE"/>
    <property type="match status" value="1"/>
</dbReference>
<reference key="1">
    <citation type="submission" date="2000-02" db="EMBL/GenBank/DDBJ databases">
        <title>Identification of novel FKBP genes.</title>
        <authorList>
            <person name="Rulten S."/>
            <person name="Kay J.E."/>
            <person name="Robinson C."/>
        </authorList>
    </citation>
    <scope>NUCLEOTIDE SEQUENCE [MRNA] (ISOFORM 1)</scope>
</reference>
<reference key="2">
    <citation type="journal article" date="2003" name="Genome Res.">
        <title>The secreted protein discovery initiative (SPDI), a large-scale effort to identify novel human secreted and transmembrane proteins: a bioinformatics assessment.</title>
        <authorList>
            <person name="Clark H.F."/>
            <person name="Gurney A.L."/>
            <person name="Abaya E."/>
            <person name="Baker K."/>
            <person name="Baldwin D.T."/>
            <person name="Brush J."/>
            <person name="Chen J."/>
            <person name="Chow B."/>
            <person name="Chui C."/>
            <person name="Crowley C."/>
            <person name="Currell B."/>
            <person name="Deuel B."/>
            <person name="Dowd P."/>
            <person name="Eaton D."/>
            <person name="Foster J.S."/>
            <person name="Grimaldi C."/>
            <person name="Gu Q."/>
            <person name="Hass P.E."/>
            <person name="Heldens S."/>
            <person name="Huang A."/>
            <person name="Kim H.S."/>
            <person name="Klimowski L."/>
            <person name="Jin Y."/>
            <person name="Johnson S."/>
            <person name="Lee J."/>
            <person name="Lewis L."/>
            <person name="Liao D."/>
            <person name="Mark M.R."/>
            <person name="Robbie E."/>
            <person name="Sanchez C."/>
            <person name="Schoenfeld J."/>
            <person name="Seshagiri S."/>
            <person name="Simmons L."/>
            <person name="Singh J."/>
            <person name="Smith V."/>
            <person name="Stinson J."/>
            <person name="Vagts A."/>
            <person name="Vandlen R.L."/>
            <person name="Watanabe C."/>
            <person name="Wieand D."/>
            <person name="Woods K."/>
            <person name="Xie M.-H."/>
            <person name="Yansura D.G."/>
            <person name="Yi S."/>
            <person name="Yu G."/>
            <person name="Yuan J."/>
            <person name="Zhang M."/>
            <person name="Zhang Z."/>
            <person name="Goddard A.D."/>
            <person name="Wood W.I."/>
            <person name="Godowski P.J."/>
            <person name="Gray A.M."/>
        </authorList>
    </citation>
    <scope>NUCLEOTIDE SEQUENCE [LARGE SCALE MRNA] (ISOFORM 1)</scope>
</reference>
<reference key="3">
    <citation type="journal article" date="2004" name="Nat. Genet.">
        <title>Complete sequencing and characterization of 21,243 full-length human cDNAs.</title>
        <authorList>
            <person name="Ota T."/>
            <person name="Suzuki Y."/>
            <person name="Nishikawa T."/>
            <person name="Otsuki T."/>
            <person name="Sugiyama T."/>
            <person name="Irie R."/>
            <person name="Wakamatsu A."/>
            <person name="Hayashi K."/>
            <person name="Sato H."/>
            <person name="Nagai K."/>
            <person name="Kimura K."/>
            <person name="Makita H."/>
            <person name="Sekine M."/>
            <person name="Obayashi M."/>
            <person name="Nishi T."/>
            <person name="Shibahara T."/>
            <person name="Tanaka T."/>
            <person name="Ishii S."/>
            <person name="Yamamoto J."/>
            <person name="Saito K."/>
            <person name="Kawai Y."/>
            <person name="Isono Y."/>
            <person name="Nakamura Y."/>
            <person name="Nagahari K."/>
            <person name="Murakami K."/>
            <person name="Yasuda T."/>
            <person name="Iwayanagi T."/>
            <person name="Wagatsuma M."/>
            <person name="Shiratori A."/>
            <person name="Sudo H."/>
            <person name="Hosoiri T."/>
            <person name="Kaku Y."/>
            <person name="Kodaira H."/>
            <person name="Kondo H."/>
            <person name="Sugawara M."/>
            <person name="Takahashi M."/>
            <person name="Kanda K."/>
            <person name="Yokoi T."/>
            <person name="Furuya T."/>
            <person name="Kikkawa E."/>
            <person name="Omura Y."/>
            <person name="Abe K."/>
            <person name="Kamihara K."/>
            <person name="Katsuta N."/>
            <person name="Sato K."/>
            <person name="Tanikawa M."/>
            <person name="Yamazaki M."/>
            <person name="Ninomiya K."/>
            <person name="Ishibashi T."/>
            <person name="Yamashita H."/>
            <person name="Murakawa K."/>
            <person name="Fujimori K."/>
            <person name="Tanai H."/>
            <person name="Kimata M."/>
            <person name="Watanabe M."/>
            <person name="Hiraoka S."/>
            <person name="Chiba Y."/>
            <person name="Ishida S."/>
            <person name="Ono Y."/>
            <person name="Takiguchi S."/>
            <person name="Watanabe S."/>
            <person name="Yosida M."/>
            <person name="Hotuta T."/>
            <person name="Kusano J."/>
            <person name="Kanehori K."/>
            <person name="Takahashi-Fujii A."/>
            <person name="Hara H."/>
            <person name="Tanase T.-O."/>
            <person name="Nomura Y."/>
            <person name="Togiya S."/>
            <person name="Komai F."/>
            <person name="Hara R."/>
            <person name="Takeuchi K."/>
            <person name="Arita M."/>
            <person name="Imose N."/>
            <person name="Musashino K."/>
            <person name="Yuuki H."/>
            <person name="Oshima A."/>
            <person name="Sasaki N."/>
            <person name="Aotsuka S."/>
            <person name="Yoshikawa Y."/>
            <person name="Matsunawa H."/>
            <person name="Ichihara T."/>
            <person name="Shiohata N."/>
            <person name="Sano S."/>
            <person name="Moriya S."/>
            <person name="Momiyama H."/>
            <person name="Satoh N."/>
            <person name="Takami S."/>
            <person name="Terashima Y."/>
            <person name="Suzuki O."/>
            <person name="Nakagawa S."/>
            <person name="Senoh A."/>
            <person name="Mizoguchi H."/>
            <person name="Goto Y."/>
            <person name="Shimizu F."/>
            <person name="Wakebe H."/>
            <person name="Hishigaki H."/>
            <person name="Watanabe T."/>
            <person name="Sugiyama A."/>
            <person name="Takemoto M."/>
            <person name="Kawakami B."/>
            <person name="Yamazaki M."/>
            <person name="Watanabe K."/>
            <person name="Kumagai A."/>
            <person name="Itakura S."/>
            <person name="Fukuzumi Y."/>
            <person name="Fujimori Y."/>
            <person name="Komiyama M."/>
            <person name="Tashiro H."/>
            <person name="Tanigami A."/>
            <person name="Fujiwara T."/>
            <person name="Ono T."/>
            <person name="Yamada K."/>
            <person name="Fujii Y."/>
            <person name="Ozaki K."/>
            <person name="Hirao M."/>
            <person name="Ohmori Y."/>
            <person name="Kawabata A."/>
            <person name="Hikiji T."/>
            <person name="Kobatake N."/>
            <person name="Inagaki H."/>
            <person name="Ikema Y."/>
            <person name="Okamoto S."/>
            <person name="Okitani R."/>
            <person name="Kawakami T."/>
            <person name="Noguchi S."/>
            <person name="Itoh T."/>
            <person name="Shigeta K."/>
            <person name="Senba T."/>
            <person name="Matsumura K."/>
            <person name="Nakajima Y."/>
            <person name="Mizuno T."/>
            <person name="Morinaga M."/>
            <person name="Sasaki M."/>
            <person name="Togashi T."/>
            <person name="Oyama M."/>
            <person name="Hata H."/>
            <person name="Watanabe M."/>
            <person name="Komatsu T."/>
            <person name="Mizushima-Sugano J."/>
            <person name="Satoh T."/>
            <person name="Shirai Y."/>
            <person name="Takahashi Y."/>
            <person name="Nakagawa K."/>
            <person name="Okumura K."/>
            <person name="Nagase T."/>
            <person name="Nomura N."/>
            <person name="Kikuchi H."/>
            <person name="Masuho Y."/>
            <person name="Yamashita R."/>
            <person name="Nakai K."/>
            <person name="Yada T."/>
            <person name="Nakamura Y."/>
            <person name="Ohara O."/>
            <person name="Isogai T."/>
            <person name="Sugano S."/>
        </authorList>
    </citation>
    <scope>NUCLEOTIDE SEQUENCE [LARGE SCALE MRNA] (ISOFORM 2)</scope>
    <source>
        <tissue>Synovium</tissue>
    </source>
</reference>
<reference key="4">
    <citation type="journal article" date="2006" name="Nature">
        <title>The finished DNA sequence of human chromosome 12.</title>
        <authorList>
            <person name="Scherer S.E."/>
            <person name="Muzny D.M."/>
            <person name="Buhay C.J."/>
            <person name="Chen R."/>
            <person name="Cree A."/>
            <person name="Ding Y."/>
            <person name="Dugan-Rocha S."/>
            <person name="Gill R."/>
            <person name="Gunaratne P."/>
            <person name="Harris R.A."/>
            <person name="Hawes A.C."/>
            <person name="Hernandez J."/>
            <person name="Hodgson A.V."/>
            <person name="Hume J."/>
            <person name="Jackson A."/>
            <person name="Khan Z.M."/>
            <person name="Kovar-Smith C."/>
            <person name="Lewis L.R."/>
            <person name="Lozado R.J."/>
            <person name="Metzker M.L."/>
            <person name="Milosavljevic A."/>
            <person name="Miner G.R."/>
            <person name="Montgomery K.T."/>
            <person name="Morgan M.B."/>
            <person name="Nazareth L.V."/>
            <person name="Scott G."/>
            <person name="Sodergren E."/>
            <person name="Song X.-Z."/>
            <person name="Steffen D."/>
            <person name="Lovering R.C."/>
            <person name="Wheeler D.A."/>
            <person name="Worley K.C."/>
            <person name="Yuan Y."/>
            <person name="Zhang Z."/>
            <person name="Adams C.Q."/>
            <person name="Ansari-Lari M.A."/>
            <person name="Ayele M."/>
            <person name="Brown M.J."/>
            <person name="Chen G."/>
            <person name="Chen Z."/>
            <person name="Clerc-Blankenburg K.P."/>
            <person name="Davis C."/>
            <person name="Delgado O."/>
            <person name="Dinh H.H."/>
            <person name="Draper H."/>
            <person name="Gonzalez-Garay M.L."/>
            <person name="Havlak P."/>
            <person name="Jackson L.R."/>
            <person name="Jacob L.S."/>
            <person name="Kelly S.H."/>
            <person name="Li L."/>
            <person name="Li Z."/>
            <person name="Liu J."/>
            <person name="Liu W."/>
            <person name="Lu J."/>
            <person name="Maheshwari M."/>
            <person name="Nguyen B.-V."/>
            <person name="Okwuonu G.O."/>
            <person name="Pasternak S."/>
            <person name="Perez L.M."/>
            <person name="Plopper F.J.H."/>
            <person name="Santibanez J."/>
            <person name="Shen H."/>
            <person name="Tabor P.E."/>
            <person name="Verduzco D."/>
            <person name="Waldron L."/>
            <person name="Wang Q."/>
            <person name="Williams G.A."/>
            <person name="Zhang J."/>
            <person name="Zhou J."/>
            <person name="Allen C.C."/>
            <person name="Amin A.G."/>
            <person name="Anyalebechi V."/>
            <person name="Bailey M."/>
            <person name="Barbaria J.A."/>
            <person name="Bimage K.E."/>
            <person name="Bryant N.P."/>
            <person name="Burch P.E."/>
            <person name="Burkett C.E."/>
            <person name="Burrell K.L."/>
            <person name="Calderon E."/>
            <person name="Cardenas V."/>
            <person name="Carter K."/>
            <person name="Casias K."/>
            <person name="Cavazos I."/>
            <person name="Cavazos S.R."/>
            <person name="Ceasar H."/>
            <person name="Chacko J."/>
            <person name="Chan S.N."/>
            <person name="Chavez D."/>
            <person name="Christopoulos C."/>
            <person name="Chu J."/>
            <person name="Cockrell R."/>
            <person name="Cox C.D."/>
            <person name="Dang M."/>
            <person name="Dathorne S.R."/>
            <person name="David R."/>
            <person name="Davis C.M."/>
            <person name="Davy-Carroll L."/>
            <person name="Deshazo D.R."/>
            <person name="Donlin J.E."/>
            <person name="D'Souza L."/>
            <person name="Eaves K.A."/>
            <person name="Egan A."/>
            <person name="Emery-Cohen A.J."/>
            <person name="Escotto M."/>
            <person name="Flagg N."/>
            <person name="Forbes L.D."/>
            <person name="Gabisi A.M."/>
            <person name="Garza M."/>
            <person name="Hamilton C."/>
            <person name="Henderson N."/>
            <person name="Hernandez O."/>
            <person name="Hines S."/>
            <person name="Hogues M.E."/>
            <person name="Huang M."/>
            <person name="Idlebird D.G."/>
            <person name="Johnson R."/>
            <person name="Jolivet A."/>
            <person name="Jones S."/>
            <person name="Kagan R."/>
            <person name="King L.M."/>
            <person name="Leal B."/>
            <person name="Lebow H."/>
            <person name="Lee S."/>
            <person name="LeVan J.M."/>
            <person name="Lewis L.C."/>
            <person name="London P."/>
            <person name="Lorensuhewa L.M."/>
            <person name="Loulseged H."/>
            <person name="Lovett D.A."/>
            <person name="Lucier A."/>
            <person name="Lucier R.L."/>
            <person name="Ma J."/>
            <person name="Madu R.C."/>
            <person name="Mapua P."/>
            <person name="Martindale A.D."/>
            <person name="Martinez E."/>
            <person name="Massey E."/>
            <person name="Mawhiney S."/>
            <person name="Meador M.G."/>
            <person name="Mendez S."/>
            <person name="Mercado C."/>
            <person name="Mercado I.C."/>
            <person name="Merritt C.E."/>
            <person name="Miner Z.L."/>
            <person name="Minja E."/>
            <person name="Mitchell T."/>
            <person name="Mohabbat F."/>
            <person name="Mohabbat K."/>
            <person name="Montgomery B."/>
            <person name="Moore N."/>
            <person name="Morris S."/>
            <person name="Munidasa M."/>
            <person name="Ngo R.N."/>
            <person name="Nguyen N.B."/>
            <person name="Nickerson E."/>
            <person name="Nwaokelemeh O.O."/>
            <person name="Nwokenkwo S."/>
            <person name="Obregon M."/>
            <person name="Oguh M."/>
            <person name="Oragunye N."/>
            <person name="Oviedo R.J."/>
            <person name="Parish B.J."/>
            <person name="Parker D.N."/>
            <person name="Parrish J."/>
            <person name="Parks K.L."/>
            <person name="Paul H.A."/>
            <person name="Payton B.A."/>
            <person name="Perez A."/>
            <person name="Perrin W."/>
            <person name="Pickens A."/>
            <person name="Primus E.L."/>
            <person name="Pu L.-L."/>
            <person name="Puazo M."/>
            <person name="Quiles M.M."/>
            <person name="Quiroz J.B."/>
            <person name="Rabata D."/>
            <person name="Reeves K."/>
            <person name="Ruiz S.J."/>
            <person name="Shao H."/>
            <person name="Sisson I."/>
            <person name="Sonaike T."/>
            <person name="Sorelle R.P."/>
            <person name="Sutton A.E."/>
            <person name="Svatek A.F."/>
            <person name="Svetz L.A."/>
            <person name="Tamerisa K.S."/>
            <person name="Taylor T.R."/>
            <person name="Teague B."/>
            <person name="Thomas N."/>
            <person name="Thorn R.D."/>
            <person name="Trejos Z.Y."/>
            <person name="Trevino B.K."/>
            <person name="Ukegbu O.N."/>
            <person name="Urban J.B."/>
            <person name="Vasquez L.I."/>
            <person name="Vera V.A."/>
            <person name="Villasana D.M."/>
            <person name="Wang L."/>
            <person name="Ward-Moore S."/>
            <person name="Warren J.T."/>
            <person name="Wei X."/>
            <person name="White F."/>
            <person name="Williamson A.L."/>
            <person name="Wleczyk R."/>
            <person name="Wooden H.S."/>
            <person name="Wooden S.H."/>
            <person name="Yen J."/>
            <person name="Yoon L."/>
            <person name="Yoon V."/>
            <person name="Zorrilla S.E."/>
            <person name="Nelson D."/>
            <person name="Kucherlapati R."/>
            <person name="Weinstock G."/>
            <person name="Gibbs R.A."/>
        </authorList>
    </citation>
    <scope>NUCLEOTIDE SEQUENCE [LARGE SCALE GENOMIC DNA]</scope>
</reference>
<reference key="5">
    <citation type="journal article" date="2004" name="Genome Res.">
        <title>The status, quality, and expansion of the NIH full-length cDNA project: the Mammalian Gene Collection (MGC).</title>
        <authorList>
            <consortium name="The MGC Project Team"/>
        </authorList>
    </citation>
    <scope>NUCLEOTIDE SEQUENCE [LARGE SCALE MRNA] (ISOFORM 1)</scope>
    <source>
        <tissue>Pancreas</tissue>
        <tissue>Spleen</tissue>
    </source>
</reference>
<reference key="6">
    <citation type="journal article" date="2011" name="BMC Syst. Biol.">
        <title>Initial characterization of the human central proteome.</title>
        <authorList>
            <person name="Burkard T.R."/>
            <person name="Planyavsky M."/>
            <person name="Kaupe I."/>
            <person name="Breitwieser F.P."/>
            <person name="Buerckstuemmer T."/>
            <person name="Bennett K.L."/>
            <person name="Superti-Furga G."/>
            <person name="Colinge J."/>
        </authorList>
    </citation>
    <scope>IDENTIFICATION BY MASS SPECTROMETRY [LARGE SCALE ANALYSIS]</scope>
</reference>
<sequence length="201" mass="22180">MTLRPSLLPLHLLLLLLLSAAVCRAEAGLETESPVRTLQVETLVEPPEPCAEPAAFGDTLHIHYTGSLVDGRIIDTSLTRDPLVIELGQKQVIPGLEQSLLDMCVGEKRRAIIPSHLAYGKRGFPPSVPADAVVQYDVELIALIRANYWLKLVKGILPLVGMAMVPALLGLIGYHLYRKANRPKVSKKKLKEEKRNKSKKK</sequence>
<proteinExistence type="evidence at protein level"/>
<accession>Q9NYL4</accession>
<accession>B4DWB7</accession>
<protein>
    <recommendedName>
        <fullName>Peptidyl-prolyl cis-trans isomerase FKBP11</fullName>
        <shortName>PPIase FKBP11</shortName>
        <ecNumber>5.2.1.8</ecNumber>
    </recommendedName>
    <alternativeName>
        <fullName>19 kDa FK506-binding protein</fullName>
        <shortName>19 kDa FKBP</shortName>
        <shortName>FKBP-19</shortName>
    </alternativeName>
    <alternativeName>
        <fullName>FK506-binding protein 11</fullName>
        <shortName>FKBP-11</shortName>
    </alternativeName>
    <alternativeName>
        <fullName>Rotamase</fullName>
    </alternativeName>
</protein>
<gene>
    <name type="primary">FKBP11</name>
    <name type="synonym">FKBP19</name>
    <name type="ORF">UNQ336/PRO535</name>
</gene>
<evidence type="ECO:0000250" key="1">
    <source>
        <dbReference type="UniProtKB" id="Q9D1M7"/>
    </source>
</evidence>
<evidence type="ECO:0000255" key="2"/>
<evidence type="ECO:0000255" key="3">
    <source>
        <dbReference type="PROSITE-ProRule" id="PRU00277"/>
    </source>
</evidence>
<evidence type="ECO:0000303" key="4">
    <source>
    </source>
</evidence>
<evidence type="ECO:0000305" key="5"/>
<keyword id="KW-0025">Alternative splicing</keyword>
<keyword id="KW-0413">Isomerase</keyword>
<keyword id="KW-0472">Membrane</keyword>
<keyword id="KW-1267">Proteomics identification</keyword>
<keyword id="KW-1185">Reference proteome</keyword>
<keyword id="KW-0697">Rotamase</keyword>
<keyword id="KW-0732">Signal</keyword>
<keyword id="KW-0812">Transmembrane</keyword>
<keyword id="KW-1133">Transmembrane helix</keyword>
<name>FKB11_HUMAN</name>
<feature type="signal peptide" evidence="2">
    <location>
        <begin position="1"/>
        <end position="27"/>
    </location>
</feature>
<feature type="chain" id="PRO_0000025519" description="Peptidyl-prolyl cis-trans isomerase FKBP11">
    <location>
        <begin position="28"/>
        <end position="201"/>
    </location>
</feature>
<feature type="transmembrane region" description="Helical" evidence="2">
    <location>
        <begin position="156"/>
        <end position="176"/>
    </location>
</feature>
<feature type="domain" description="PPIase FKBP-type" evidence="3">
    <location>
        <begin position="57"/>
        <end position="144"/>
    </location>
</feature>
<feature type="splice variant" id="VSP_043037" description="In isoform 2." evidence="4">
    <original>ADAVVQYDVELIALIRANYWLKLVKGILPLVGMAMVPALLGLIGYHLYRKANRPKVSKKKLKEEKRNKSKKK</original>
    <variation>GTKDNLMRPPGMTSSSQ</variation>
    <location>
        <begin position="130"/>
        <end position="201"/>
    </location>
</feature>